<name>SECA_KINRD</name>
<evidence type="ECO:0000255" key="1">
    <source>
        <dbReference type="HAMAP-Rule" id="MF_01382"/>
    </source>
</evidence>
<evidence type="ECO:0000256" key="2">
    <source>
        <dbReference type="SAM" id="MobiDB-lite"/>
    </source>
</evidence>
<comment type="function">
    <text evidence="1">Part of the Sec protein translocase complex. Interacts with the SecYEG preprotein conducting channel. Has a central role in coupling the hydrolysis of ATP to the transfer of proteins into and across the cell membrane, serving as an ATP-driven molecular motor driving the stepwise translocation of polypeptide chains across the membrane.</text>
</comment>
<comment type="catalytic activity">
    <reaction evidence="1">
        <text>ATP + H2O + cellular proteinSide 1 = ADP + phosphate + cellular proteinSide 2.</text>
        <dbReference type="EC" id="7.4.2.8"/>
    </reaction>
</comment>
<comment type="subunit">
    <text evidence="1">Monomer and homodimer. Part of the essential Sec protein translocation apparatus which comprises SecA, SecYEG and auxiliary proteins SecDF. Other proteins may also be involved.</text>
</comment>
<comment type="subcellular location">
    <subcellularLocation>
        <location evidence="1">Cell membrane</location>
        <topology evidence="1">Peripheral membrane protein</topology>
        <orientation evidence="1">Cytoplasmic side</orientation>
    </subcellularLocation>
    <subcellularLocation>
        <location evidence="1">Cytoplasm</location>
    </subcellularLocation>
    <text evidence="1">Distribution is 50-50.</text>
</comment>
<comment type="similarity">
    <text evidence="1">Belongs to the SecA family.</text>
</comment>
<protein>
    <recommendedName>
        <fullName evidence="1">Protein translocase subunit SecA</fullName>
        <ecNumber evidence="1">7.4.2.8</ecNumber>
    </recommendedName>
</protein>
<sequence length="895" mass="99816">MPAIVEKVLRAGEGRVVKRLHRVAEQVNALESDFEAMNDEELRGETVRFRERLAAGETLDDLLPEAFAVVREAARRTLGQRHFDVQLMGGAALHQGNIAEMRTGEGKTLVATLPAYLNALSGKGVHVITVNDFLAEYQSELMGRVYRFLGLTSACILSRMRPDERREAYAADITYGTNNEFGFDYLRDNMAWSTAEMVQRGHNFAIVDEVDSILIDEARTPLIISGPSDSPTKWYGEFAKIARRLTVDVDYEVDEKKRTIGILEAGIEKVEDLLGIENLYESVNTPLIGFLNNAVKAKELFKRDKDYVVSPNDEVLIVDEHTGRILAGRRYNEGMHQAIEAKEGVPIQNENQTLATITLQNFFRMYDKLAGMTGTAMTEAAEFHQTYKLGVVPIPTNRPAVRVDQPDLVYKNEQAKFAAVVEDIAEHHAAGQPVLVGTTSVEKSEYLSTLLTKAGVEHTVLNAKQHEREASIVAMAGRKGAVTVATNMAGRGTDIILGGNAEFLAVQAMRDKGLDPDETPEDYEAAWPEVLEQAQASVKAEHDEVRDLGGLYVLGTERHESRRIDNQLRGRSGRQGDPGESRFYLSLTDDLMRLFNAALVESFLTRTGIPEDVPIESKMVSRAIQSAQGQVEGRNFEIRKNVLKYDDVLNRQREVIYAERRKVLEGEDLHLQIRHFIDDVVTAYVTEATARGFGEDWDLDELFEALRSLYPVSVTPEEVVEAAGGRGNLTVERLLEEMRADAQACYDAREQELGETVVRDLERRVVLSVLDRKWREHLYEMDYLQEGIGLRAMAQRDPLVEYQREGYQLFGAMTEAIKEESVGYLFSLQVQPAAQAGAAATPPGFGAPPVRQQLQYSAPTAEGDVEVHAGDAAATDADTGNRAQRRANQRQQREV</sequence>
<keyword id="KW-0067">ATP-binding</keyword>
<keyword id="KW-1003">Cell membrane</keyword>
<keyword id="KW-0963">Cytoplasm</keyword>
<keyword id="KW-0472">Membrane</keyword>
<keyword id="KW-0547">Nucleotide-binding</keyword>
<keyword id="KW-0653">Protein transport</keyword>
<keyword id="KW-1185">Reference proteome</keyword>
<keyword id="KW-1278">Translocase</keyword>
<keyword id="KW-0811">Translocation</keyword>
<keyword id="KW-0813">Transport</keyword>
<accession>A6WEN1</accession>
<dbReference type="EC" id="7.4.2.8" evidence="1"/>
<dbReference type="EMBL" id="CP000750">
    <property type="protein sequence ID" value="ABS05270.1"/>
    <property type="molecule type" value="Genomic_DNA"/>
</dbReference>
<dbReference type="RefSeq" id="WP_012086448.1">
    <property type="nucleotide sequence ID" value="NC_009664.2"/>
</dbReference>
<dbReference type="SMR" id="A6WEN1"/>
<dbReference type="STRING" id="266940.Krad_3807"/>
<dbReference type="KEGG" id="kra:Krad_3807"/>
<dbReference type="eggNOG" id="COG0653">
    <property type="taxonomic scope" value="Bacteria"/>
</dbReference>
<dbReference type="HOGENOM" id="CLU_005314_3_0_11"/>
<dbReference type="OrthoDB" id="9805579at2"/>
<dbReference type="Proteomes" id="UP000001116">
    <property type="component" value="Chromosome"/>
</dbReference>
<dbReference type="GO" id="GO:0031522">
    <property type="term" value="C:cell envelope Sec protein transport complex"/>
    <property type="evidence" value="ECO:0007669"/>
    <property type="project" value="TreeGrafter"/>
</dbReference>
<dbReference type="GO" id="GO:0005829">
    <property type="term" value="C:cytosol"/>
    <property type="evidence" value="ECO:0007669"/>
    <property type="project" value="TreeGrafter"/>
</dbReference>
<dbReference type="GO" id="GO:0005886">
    <property type="term" value="C:plasma membrane"/>
    <property type="evidence" value="ECO:0007669"/>
    <property type="project" value="UniProtKB-SubCell"/>
</dbReference>
<dbReference type="GO" id="GO:0005524">
    <property type="term" value="F:ATP binding"/>
    <property type="evidence" value="ECO:0007669"/>
    <property type="project" value="UniProtKB-UniRule"/>
</dbReference>
<dbReference type="GO" id="GO:0008564">
    <property type="term" value="F:protein-exporting ATPase activity"/>
    <property type="evidence" value="ECO:0007669"/>
    <property type="project" value="UniProtKB-EC"/>
</dbReference>
<dbReference type="GO" id="GO:0065002">
    <property type="term" value="P:intracellular protein transmembrane transport"/>
    <property type="evidence" value="ECO:0007669"/>
    <property type="project" value="UniProtKB-UniRule"/>
</dbReference>
<dbReference type="GO" id="GO:0017038">
    <property type="term" value="P:protein import"/>
    <property type="evidence" value="ECO:0007669"/>
    <property type="project" value="InterPro"/>
</dbReference>
<dbReference type="GO" id="GO:0006605">
    <property type="term" value="P:protein targeting"/>
    <property type="evidence" value="ECO:0007669"/>
    <property type="project" value="UniProtKB-UniRule"/>
</dbReference>
<dbReference type="GO" id="GO:0043952">
    <property type="term" value="P:protein transport by the Sec complex"/>
    <property type="evidence" value="ECO:0007669"/>
    <property type="project" value="TreeGrafter"/>
</dbReference>
<dbReference type="CDD" id="cd17928">
    <property type="entry name" value="DEXDc_SecA"/>
    <property type="match status" value="1"/>
</dbReference>
<dbReference type="CDD" id="cd18803">
    <property type="entry name" value="SF2_C_secA"/>
    <property type="match status" value="1"/>
</dbReference>
<dbReference type="FunFam" id="1.10.3060.10:FF:000002">
    <property type="entry name" value="Preprotein translocase subunit SecA"/>
    <property type="match status" value="1"/>
</dbReference>
<dbReference type="FunFam" id="3.40.50.300:FF:000113">
    <property type="entry name" value="Preprotein translocase subunit SecA"/>
    <property type="match status" value="1"/>
</dbReference>
<dbReference type="FunFam" id="3.40.50.300:FF:000334">
    <property type="entry name" value="Protein translocase subunit SecA"/>
    <property type="match status" value="1"/>
</dbReference>
<dbReference type="FunFam" id="3.90.1440.10:FF:000002">
    <property type="entry name" value="Protein translocase subunit SecA"/>
    <property type="match status" value="1"/>
</dbReference>
<dbReference type="Gene3D" id="1.10.3060.10">
    <property type="entry name" value="Helical scaffold and wing domains of SecA"/>
    <property type="match status" value="1"/>
</dbReference>
<dbReference type="Gene3D" id="3.40.50.300">
    <property type="entry name" value="P-loop containing nucleotide triphosphate hydrolases"/>
    <property type="match status" value="2"/>
</dbReference>
<dbReference type="Gene3D" id="3.90.1440.10">
    <property type="entry name" value="SecA, preprotein cross-linking domain"/>
    <property type="match status" value="1"/>
</dbReference>
<dbReference type="HAMAP" id="MF_01382">
    <property type="entry name" value="SecA"/>
    <property type="match status" value="1"/>
</dbReference>
<dbReference type="InterPro" id="IPR014001">
    <property type="entry name" value="Helicase_ATP-bd"/>
</dbReference>
<dbReference type="InterPro" id="IPR001650">
    <property type="entry name" value="Helicase_C-like"/>
</dbReference>
<dbReference type="InterPro" id="IPR027417">
    <property type="entry name" value="P-loop_NTPase"/>
</dbReference>
<dbReference type="InterPro" id="IPR000185">
    <property type="entry name" value="SecA"/>
</dbReference>
<dbReference type="InterPro" id="IPR020937">
    <property type="entry name" value="SecA_CS"/>
</dbReference>
<dbReference type="InterPro" id="IPR011115">
    <property type="entry name" value="SecA_DEAD"/>
</dbReference>
<dbReference type="InterPro" id="IPR014018">
    <property type="entry name" value="SecA_motor_DEAD"/>
</dbReference>
<dbReference type="InterPro" id="IPR011130">
    <property type="entry name" value="SecA_preprotein_X-link_dom"/>
</dbReference>
<dbReference type="InterPro" id="IPR044722">
    <property type="entry name" value="SecA_SF2_C"/>
</dbReference>
<dbReference type="InterPro" id="IPR011116">
    <property type="entry name" value="SecA_Wing/Scaffold"/>
</dbReference>
<dbReference type="InterPro" id="IPR036266">
    <property type="entry name" value="SecA_Wing/Scaffold_sf"/>
</dbReference>
<dbReference type="InterPro" id="IPR036670">
    <property type="entry name" value="SecA_X-link_sf"/>
</dbReference>
<dbReference type="NCBIfam" id="NF009538">
    <property type="entry name" value="PRK12904.1"/>
    <property type="match status" value="1"/>
</dbReference>
<dbReference type="NCBIfam" id="TIGR00963">
    <property type="entry name" value="secA"/>
    <property type="match status" value="1"/>
</dbReference>
<dbReference type="PANTHER" id="PTHR30612:SF0">
    <property type="entry name" value="CHLOROPLAST PROTEIN-TRANSPORTING ATPASE"/>
    <property type="match status" value="1"/>
</dbReference>
<dbReference type="PANTHER" id="PTHR30612">
    <property type="entry name" value="SECA INNER MEMBRANE COMPONENT OF SEC PROTEIN SECRETION SYSTEM"/>
    <property type="match status" value="1"/>
</dbReference>
<dbReference type="Pfam" id="PF21090">
    <property type="entry name" value="P-loop_SecA"/>
    <property type="match status" value="1"/>
</dbReference>
<dbReference type="Pfam" id="PF07517">
    <property type="entry name" value="SecA_DEAD"/>
    <property type="match status" value="1"/>
</dbReference>
<dbReference type="Pfam" id="PF01043">
    <property type="entry name" value="SecA_PP_bind"/>
    <property type="match status" value="1"/>
</dbReference>
<dbReference type="Pfam" id="PF07516">
    <property type="entry name" value="SecA_SW"/>
    <property type="match status" value="1"/>
</dbReference>
<dbReference type="PRINTS" id="PR00906">
    <property type="entry name" value="SECA"/>
</dbReference>
<dbReference type="SMART" id="SM00957">
    <property type="entry name" value="SecA_DEAD"/>
    <property type="match status" value="1"/>
</dbReference>
<dbReference type="SMART" id="SM00958">
    <property type="entry name" value="SecA_PP_bind"/>
    <property type="match status" value="1"/>
</dbReference>
<dbReference type="SUPFAM" id="SSF81886">
    <property type="entry name" value="Helical scaffold and wing domains of SecA"/>
    <property type="match status" value="1"/>
</dbReference>
<dbReference type="SUPFAM" id="SSF52540">
    <property type="entry name" value="P-loop containing nucleoside triphosphate hydrolases"/>
    <property type="match status" value="2"/>
</dbReference>
<dbReference type="SUPFAM" id="SSF81767">
    <property type="entry name" value="Pre-protein crosslinking domain of SecA"/>
    <property type="match status" value="1"/>
</dbReference>
<dbReference type="PROSITE" id="PS01312">
    <property type="entry name" value="SECA"/>
    <property type="match status" value="1"/>
</dbReference>
<dbReference type="PROSITE" id="PS51196">
    <property type="entry name" value="SECA_MOTOR_DEAD"/>
    <property type="match status" value="1"/>
</dbReference>
<proteinExistence type="inferred from homology"/>
<organism>
    <name type="scientific">Kineococcus radiotolerans (strain ATCC BAA-149 / DSM 14245 / SRS30216)</name>
    <dbReference type="NCBI Taxonomy" id="266940"/>
    <lineage>
        <taxon>Bacteria</taxon>
        <taxon>Bacillati</taxon>
        <taxon>Actinomycetota</taxon>
        <taxon>Actinomycetes</taxon>
        <taxon>Kineosporiales</taxon>
        <taxon>Kineosporiaceae</taxon>
        <taxon>Kineococcus</taxon>
    </lineage>
</organism>
<reference key="1">
    <citation type="journal article" date="2008" name="PLoS ONE">
        <title>Survival in nuclear waste, extreme resistance, and potential applications gleaned from the genome sequence of Kineococcus radiotolerans SRS30216.</title>
        <authorList>
            <person name="Bagwell C.E."/>
            <person name="Bhat S."/>
            <person name="Hawkins G.M."/>
            <person name="Smith B.W."/>
            <person name="Biswas T."/>
            <person name="Hoover T.R."/>
            <person name="Saunders E."/>
            <person name="Han C.S."/>
            <person name="Tsodikov O.V."/>
            <person name="Shimkets L.J."/>
        </authorList>
    </citation>
    <scope>NUCLEOTIDE SEQUENCE [LARGE SCALE GENOMIC DNA]</scope>
    <source>
        <strain>ATCC BAA-149 / DSM 14245 / SRS30216</strain>
    </source>
</reference>
<gene>
    <name evidence="1" type="primary">secA</name>
    <name type="ordered locus">Krad_3807</name>
</gene>
<feature type="chain" id="PRO_1000184233" description="Protein translocase subunit SecA">
    <location>
        <begin position="1"/>
        <end position="895"/>
    </location>
</feature>
<feature type="region of interest" description="Disordered" evidence="2">
    <location>
        <begin position="838"/>
        <end position="895"/>
    </location>
</feature>
<feature type="compositionally biased region" description="Low complexity" evidence="2">
    <location>
        <begin position="838"/>
        <end position="849"/>
    </location>
</feature>
<feature type="compositionally biased region" description="Low complexity" evidence="2">
    <location>
        <begin position="870"/>
        <end position="882"/>
    </location>
</feature>
<feature type="binding site" evidence="1">
    <location>
        <position position="86"/>
    </location>
    <ligand>
        <name>ATP</name>
        <dbReference type="ChEBI" id="CHEBI:30616"/>
    </ligand>
</feature>
<feature type="binding site" evidence="1">
    <location>
        <begin position="104"/>
        <end position="108"/>
    </location>
    <ligand>
        <name>ATP</name>
        <dbReference type="ChEBI" id="CHEBI:30616"/>
    </ligand>
</feature>
<feature type="binding site" evidence="1">
    <location>
        <position position="494"/>
    </location>
    <ligand>
        <name>ATP</name>
        <dbReference type="ChEBI" id="CHEBI:30616"/>
    </ligand>
</feature>